<sequence length="292" mass="31235">MEITASLVKELRERTGVGMMECKKALSENAGNIDAAVEWLRKSGLVKADKKAGRIAAEGRIVVVHDGGKAVLVEINSETDFVAKDSHFLAFAEAVAQAALVAGAVDVEALKSVKLPSGETVEEARAAVIAKIGENVRVRRLARIDSANNVAAYVHGGRIGVLVEVKGGDVELARGIAMHVAAMNPPYNKVADVSAEFLEKEKEIELSKMSEKDKSKPADILEKIISGKINKIVKEVTLYGQPYVLNADQSVEQVVKAAGADVIGFQRMEVGEGIEKIVEDYASEVMKQVGLS</sequence>
<organism>
    <name type="scientific">Xylella fastidiosa (strain 9a5c)</name>
    <dbReference type="NCBI Taxonomy" id="160492"/>
    <lineage>
        <taxon>Bacteria</taxon>
        <taxon>Pseudomonadati</taxon>
        <taxon>Pseudomonadota</taxon>
        <taxon>Gammaproteobacteria</taxon>
        <taxon>Lysobacterales</taxon>
        <taxon>Lysobacteraceae</taxon>
        <taxon>Xylella</taxon>
    </lineage>
</organism>
<accession>Q9PAD9</accession>
<gene>
    <name evidence="1" type="primary">tsf</name>
    <name type="ordered locus">XF_2579</name>
</gene>
<protein>
    <recommendedName>
        <fullName evidence="1">Elongation factor Ts</fullName>
        <shortName evidence="1">EF-Ts</shortName>
    </recommendedName>
</protein>
<dbReference type="EMBL" id="AE003849">
    <property type="protein sequence ID" value="AAF85376.1"/>
    <property type="status" value="ALT_INIT"/>
    <property type="molecule type" value="Genomic_DNA"/>
</dbReference>
<dbReference type="PIR" id="B82539">
    <property type="entry name" value="B82539"/>
</dbReference>
<dbReference type="RefSeq" id="WP_010894998.1">
    <property type="nucleotide sequence ID" value="NC_002488.3"/>
</dbReference>
<dbReference type="SMR" id="Q9PAD9"/>
<dbReference type="STRING" id="160492.XF_2579"/>
<dbReference type="KEGG" id="xfa:XF_2579"/>
<dbReference type="eggNOG" id="COG0264">
    <property type="taxonomic scope" value="Bacteria"/>
</dbReference>
<dbReference type="HOGENOM" id="CLU_047155_0_0_6"/>
<dbReference type="Proteomes" id="UP000000812">
    <property type="component" value="Chromosome"/>
</dbReference>
<dbReference type="GO" id="GO:0005737">
    <property type="term" value="C:cytoplasm"/>
    <property type="evidence" value="ECO:0007669"/>
    <property type="project" value="UniProtKB-SubCell"/>
</dbReference>
<dbReference type="GO" id="GO:0003746">
    <property type="term" value="F:translation elongation factor activity"/>
    <property type="evidence" value="ECO:0007669"/>
    <property type="project" value="UniProtKB-UniRule"/>
</dbReference>
<dbReference type="CDD" id="cd14275">
    <property type="entry name" value="UBA_EF-Ts"/>
    <property type="match status" value="1"/>
</dbReference>
<dbReference type="FunFam" id="1.10.286.20:FF:000001">
    <property type="entry name" value="Elongation factor Ts"/>
    <property type="match status" value="1"/>
</dbReference>
<dbReference type="FunFam" id="1.10.8.10:FF:000001">
    <property type="entry name" value="Elongation factor Ts"/>
    <property type="match status" value="1"/>
</dbReference>
<dbReference type="FunFam" id="3.30.479.20:FF:000001">
    <property type="entry name" value="Elongation factor Ts"/>
    <property type="match status" value="1"/>
</dbReference>
<dbReference type="Gene3D" id="1.10.286.20">
    <property type="match status" value="1"/>
</dbReference>
<dbReference type="Gene3D" id="1.10.8.10">
    <property type="entry name" value="DNA helicase RuvA subunit, C-terminal domain"/>
    <property type="match status" value="1"/>
</dbReference>
<dbReference type="Gene3D" id="3.30.479.20">
    <property type="entry name" value="Elongation factor Ts, dimerisation domain"/>
    <property type="match status" value="2"/>
</dbReference>
<dbReference type="HAMAP" id="MF_00050">
    <property type="entry name" value="EF_Ts"/>
    <property type="match status" value="1"/>
</dbReference>
<dbReference type="InterPro" id="IPR036402">
    <property type="entry name" value="EF-Ts_dimer_sf"/>
</dbReference>
<dbReference type="InterPro" id="IPR001816">
    <property type="entry name" value="Transl_elong_EFTs/EF1B"/>
</dbReference>
<dbReference type="InterPro" id="IPR014039">
    <property type="entry name" value="Transl_elong_EFTs/EF1B_dimer"/>
</dbReference>
<dbReference type="InterPro" id="IPR018101">
    <property type="entry name" value="Transl_elong_Ts_CS"/>
</dbReference>
<dbReference type="InterPro" id="IPR009060">
    <property type="entry name" value="UBA-like_sf"/>
</dbReference>
<dbReference type="NCBIfam" id="TIGR00116">
    <property type="entry name" value="tsf"/>
    <property type="match status" value="1"/>
</dbReference>
<dbReference type="PANTHER" id="PTHR11741">
    <property type="entry name" value="ELONGATION FACTOR TS"/>
    <property type="match status" value="1"/>
</dbReference>
<dbReference type="PANTHER" id="PTHR11741:SF0">
    <property type="entry name" value="ELONGATION FACTOR TS, MITOCHONDRIAL"/>
    <property type="match status" value="1"/>
</dbReference>
<dbReference type="Pfam" id="PF00889">
    <property type="entry name" value="EF_TS"/>
    <property type="match status" value="1"/>
</dbReference>
<dbReference type="SUPFAM" id="SSF54713">
    <property type="entry name" value="Elongation factor Ts (EF-Ts), dimerisation domain"/>
    <property type="match status" value="2"/>
</dbReference>
<dbReference type="SUPFAM" id="SSF46934">
    <property type="entry name" value="UBA-like"/>
    <property type="match status" value="1"/>
</dbReference>
<dbReference type="PROSITE" id="PS01126">
    <property type="entry name" value="EF_TS_1"/>
    <property type="match status" value="1"/>
</dbReference>
<dbReference type="PROSITE" id="PS01127">
    <property type="entry name" value="EF_TS_2"/>
    <property type="match status" value="1"/>
</dbReference>
<reference key="1">
    <citation type="journal article" date="2000" name="Nature">
        <title>The genome sequence of the plant pathogen Xylella fastidiosa.</title>
        <authorList>
            <person name="Simpson A.J.G."/>
            <person name="Reinach F.C."/>
            <person name="Arruda P."/>
            <person name="Abreu F.A."/>
            <person name="Acencio M."/>
            <person name="Alvarenga R."/>
            <person name="Alves L.M.C."/>
            <person name="Araya J.E."/>
            <person name="Baia G.S."/>
            <person name="Baptista C.S."/>
            <person name="Barros M.H."/>
            <person name="Bonaccorsi E.D."/>
            <person name="Bordin S."/>
            <person name="Bove J.M."/>
            <person name="Briones M.R.S."/>
            <person name="Bueno M.R.P."/>
            <person name="Camargo A.A."/>
            <person name="Camargo L.E.A."/>
            <person name="Carraro D.M."/>
            <person name="Carrer H."/>
            <person name="Colauto N.B."/>
            <person name="Colombo C."/>
            <person name="Costa F.F."/>
            <person name="Costa M.C.R."/>
            <person name="Costa-Neto C.M."/>
            <person name="Coutinho L.L."/>
            <person name="Cristofani M."/>
            <person name="Dias-Neto E."/>
            <person name="Docena C."/>
            <person name="El-Dorry H."/>
            <person name="Facincani A.P."/>
            <person name="Ferreira A.J.S."/>
            <person name="Ferreira V.C.A."/>
            <person name="Ferro J.A."/>
            <person name="Fraga J.S."/>
            <person name="Franca S.C."/>
            <person name="Franco M.C."/>
            <person name="Frohme M."/>
            <person name="Furlan L.R."/>
            <person name="Garnier M."/>
            <person name="Goldman G.H."/>
            <person name="Goldman M.H.S."/>
            <person name="Gomes S.L."/>
            <person name="Gruber A."/>
            <person name="Ho P.L."/>
            <person name="Hoheisel J.D."/>
            <person name="Junqueira M.L."/>
            <person name="Kemper E.L."/>
            <person name="Kitajima J.P."/>
            <person name="Krieger J.E."/>
            <person name="Kuramae E.E."/>
            <person name="Laigret F."/>
            <person name="Lambais M.R."/>
            <person name="Leite L.C.C."/>
            <person name="Lemos E.G.M."/>
            <person name="Lemos M.V.F."/>
            <person name="Lopes S.A."/>
            <person name="Lopes C.R."/>
            <person name="Machado J.A."/>
            <person name="Machado M.A."/>
            <person name="Madeira A.M.B.N."/>
            <person name="Madeira H.M.F."/>
            <person name="Marino C.L."/>
            <person name="Marques M.V."/>
            <person name="Martins E.A.L."/>
            <person name="Martins E.M.F."/>
            <person name="Matsukuma A.Y."/>
            <person name="Menck C.F.M."/>
            <person name="Miracca E.C."/>
            <person name="Miyaki C.Y."/>
            <person name="Monteiro-Vitorello C.B."/>
            <person name="Moon D.H."/>
            <person name="Nagai M.A."/>
            <person name="Nascimento A.L.T.O."/>
            <person name="Netto L.E.S."/>
            <person name="Nhani A. Jr."/>
            <person name="Nobrega F.G."/>
            <person name="Nunes L.R."/>
            <person name="Oliveira M.A."/>
            <person name="de Oliveira M.C."/>
            <person name="de Oliveira R.C."/>
            <person name="Palmieri D.A."/>
            <person name="Paris A."/>
            <person name="Peixoto B.R."/>
            <person name="Pereira G.A.G."/>
            <person name="Pereira H.A. Jr."/>
            <person name="Pesquero J.B."/>
            <person name="Quaggio R.B."/>
            <person name="Roberto P.G."/>
            <person name="Rodrigues V."/>
            <person name="de Rosa A.J.M."/>
            <person name="de Rosa V.E. Jr."/>
            <person name="de Sa R.G."/>
            <person name="Santelli R.V."/>
            <person name="Sawasaki H.E."/>
            <person name="da Silva A.C.R."/>
            <person name="da Silva A.M."/>
            <person name="da Silva F.R."/>
            <person name="Silva W.A. Jr."/>
            <person name="da Silveira J.F."/>
            <person name="Silvestri M.L.Z."/>
            <person name="Siqueira W.J."/>
            <person name="de Souza A.A."/>
            <person name="de Souza A.P."/>
            <person name="Terenzi M.F."/>
            <person name="Truffi D."/>
            <person name="Tsai S.M."/>
            <person name="Tsuhako M.H."/>
            <person name="Vallada H."/>
            <person name="Van Sluys M.A."/>
            <person name="Verjovski-Almeida S."/>
            <person name="Vettore A.L."/>
            <person name="Zago M.A."/>
            <person name="Zatz M."/>
            <person name="Meidanis J."/>
            <person name="Setubal J.C."/>
        </authorList>
    </citation>
    <scope>NUCLEOTIDE SEQUENCE [LARGE SCALE GENOMIC DNA]</scope>
    <source>
        <strain>9a5c</strain>
    </source>
</reference>
<feature type="chain" id="PRO_0000161238" description="Elongation factor Ts">
    <location>
        <begin position="1"/>
        <end position="292"/>
    </location>
</feature>
<feature type="region of interest" description="Involved in Mg(2+) ion dislocation from EF-Tu" evidence="1">
    <location>
        <begin position="79"/>
        <end position="82"/>
    </location>
</feature>
<evidence type="ECO:0000255" key="1">
    <source>
        <dbReference type="HAMAP-Rule" id="MF_00050"/>
    </source>
</evidence>
<evidence type="ECO:0000305" key="2"/>
<keyword id="KW-0963">Cytoplasm</keyword>
<keyword id="KW-0251">Elongation factor</keyword>
<keyword id="KW-0648">Protein biosynthesis</keyword>
<proteinExistence type="inferred from homology"/>
<comment type="function">
    <text evidence="1">Associates with the EF-Tu.GDP complex and induces the exchange of GDP to GTP. It remains bound to the aminoacyl-tRNA.EF-Tu.GTP complex up to the GTP hydrolysis stage on the ribosome.</text>
</comment>
<comment type="subcellular location">
    <subcellularLocation>
        <location evidence="1">Cytoplasm</location>
    </subcellularLocation>
</comment>
<comment type="similarity">
    <text evidence="1">Belongs to the EF-Ts family.</text>
</comment>
<comment type="sequence caution" evidence="2">
    <conflict type="erroneous initiation">
        <sequence resource="EMBL-CDS" id="AAF85376"/>
    </conflict>
</comment>
<name>EFTS_XYLFA</name>